<proteinExistence type="inferred from homology"/>
<dbReference type="EC" id="5.4.99.24"/>
<dbReference type="EMBL" id="AJ235271">
    <property type="protein sequence ID" value="CAA14720.1"/>
    <property type="molecule type" value="Genomic_DNA"/>
</dbReference>
<dbReference type="PIR" id="F71680">
    <property type="entry name" value="F71680"/>
</dbReference>
<dbReference type="RefSeq" id="NP_220643.1">
    <property type="nucleotide sequence ID" value="NC_000963.1"/>
</dbReference>
<dbReference type="RefSeq" id="WP_004596089.1">
    <property type="nucleotide sequence ID" value="NC_000963.1"/>
</dbReference>
<dbReference type="SMR" id="Q9ZDR7"/>
<dbReference type="STRING" id="272947.gene:17555339"/>
<dbReference type="EnsemblBacteria" id="CAA14720">
    <property type="protein sequence ID" value="CAA14720"/>
    <property type="gene ID" value="CAA14720"/>
</dbReference>
<dbReference type="KEGG" id="rpr:RP258"/>
<dbReference type="PATRIC" id="fig|272947.5.peg.265"/>
<dbReference type="eggNOG" id="COG0564">
    <property type="taxonomic scope" value="Bacteria"/>
</dbReference>
<dbReference type="HOGENOM" id="CLU_016902_1_2_5"/>
<dbReference type="OrthoDB" id="9807829at2"/>
<dbReference type="Proteomes" id="UP000002480">
    <property type="component" value="Chromosome"/>
</dbReference>
<dbReference type="GO" id="GO:0160141">
    <property type="term" value="F:23S rRNA pseudouridine(955/2504/2580) synthase activity"/>
    <property type="evidence" value="ECO:0007669"/>
    <property type="project" value="UniProtKB-EC"/>
</dbReference>
<dbReference type="GO" id="GO:0003723">
    <property type="term" value="F:RNA binding"/>
    <property type="evidence" value="ECO:0007669"/>
    <property type="project" value="UniProtKB-KW"/>
</dbReference>
<dbReference type="GO" id="GO:0000455">
    <property type="term" value="P:enzyme-directed rRNA pseudouridine synthesis"/>
    <property type="evidence" value="ECO:0007669"/>
    <property type="project" value="UniProtKB-ARBA"/>
</dbReference>
<dbReference type="CDD" id="cd02869">
    <property type="entry name" value="PseudoU_synth_RluA_like"/>
    <property type="match status" value="1"/>
</dbReference>
<dbReference type="CDD" id="cd00165">
    <property type="entry name" value="S4"/>
    <property type="match status" value="1"/>
</dbReference>
<dbReference type="Gene3D" id="3.30.2350.10">
    <property type="entry name" value="Pseudouridine synthase"/>
    <property type="match status" value="1"/>
</dbReference>
<dbReference type="Gene3D" id="3.10.290.10">
    <property type="entry name" value="RNA-binding S4 domain"/>
    <property type="match status" value="1"/>
</dbReference>
<dbReference type="InterPro" id="IPR020103">
    <property type="entry name" value="PsdUridine_synth_cat_dom_sf"/>
</dbReference>
<dbReference type="InterPro" id="IPR006224">
    <property type="entry name" value="PsdUridine_synth_RluA-like_CS"/>
</dbReference>
<dbReference type="InterPro" id="IPR006145">
    <property type="entry name" value="PsdUridine_synth_RsuA/RluA"/>
</dbReference>
<dbReference type="InterPro" id="IPR050188">
    <property type="entry name" value="RluA_PseudoU_synthase"/>
</dbReference>
<dbReference type="InterPro" id="IPR002942">
    <property type="entry name" value="S4_RNA-bd"/>
</dbReference>
<dbReference type="InterPro" id="IPR036986">
    <property type="entry name" value="S4_RNA-bd_sf"/>
</dbReference>
<dbReference type="PANTHER" id="PTHR21600">
    <property type="entry name" value="MITOCHONDRIAL RNA PSEUDOURIDINE SYNTHASE"/>
    <property type="match status" value="1"/>
</dbReference>
<dbReference type="Pfam" id="PF00849">
    <property type="entry name" value="PseudoU_synth_2"/>
    <property type="match status" value="1"/>
</dbReference>
<dbReference type="Pfam" id="PF01479">
    <property type="entry name" value="S4"/>
    <property type="match status" value="1"/>
</dbReference>
<dbReference type="SMART" id="SM00363">
    <property type="entry name" value="S4"/>
    <property type="match status" value="1"/>
</dbReference>
<dbReference type="SUPFAM" id="SSF55174">
    <property type="entry name" value="Alpha-L RNA-binding motif"/>
    <property type="match status" value="1"/>
</dbReference>
<dbReference type="SUPFAM" id="SSF55120">
    <property type="entry name" value="Pseudouridine synthase"/>
    <property type="match status" value="1"/>
</dbReference>
<dbReference type="PROSITE" id="PS01129">
    <property type="entry name" value="PSI_RLU"/>
    <property type="match status" value="1"/>
</dbReference>
<dbReference type="PROSITE" id="PS50889">
    <property type="entry name" value="S4"/>
    <property type="match status" value="1"/>
</dbReference>
<keyword id="KW-0413">Isomerase</keyword>
<keyword id="KW-1185">Reference proteome</keyword>
<keyword id="KW-0694">RNA-binding</keyword>
<keyword id="KW-0698">rRNA processing</keyword>
<gene>
    <name type="primary">rluC</name>
    <name type="ordered locus">RP258</name>
</gene>
<feature type="chain" id="PRO_0000162675" description="Ribosomal large subunit pseudouridine synthase C">
    <location>
        <begin position="1"/>
        <end position="303"/>
    </location>
</feature>
<feature type="domain" description="S4 RNA-binding" evidence="2">
    <location>
        <begin position="11"/>
        <end position="87"/>
    </location>
</feature>
<feature type="active site" evidence="1">
    <location>
        <position position="140"/>
    </location>
</feature>
<organism>
    <name type="scientific">Rickettsia prowazekii (strain Madrid E)</name>
    <dbReference type="NCBI Taxonomy" id="272947"/>
    <lineage>
        <taxon>Bacteria</taxon>
        <taxon>Pseudomonadati</taxon>
        <taxon>Pseudomonadota</taxon>
        <taxon>Alphaproteobacteria</taxon>
        <taxon>Rickettsiales</taxon>
        <taxon>Rickettsiaceae</taxon>
        <taxon>Rickettsieae</taxon>
        <taxon>Rickettsia</taxon>
        <taxon>typhus group</taxon>
    </lineage>
</organism>
<sequence length="303" mass="34702">MIIDVNIPIPFRLDKYLKRLYPLLTQGVIEKALRQKQITVNFQKAEANLRVKVGDTIFINDYFNLPVTQHETLVFADAEIKLAKKILTDYLIYEDDHLIAINKPASLATQGGSKINLSIDSALKYLNYQGADFKLVHRLDKETSGLLLIAKNYLSSVKLHNAFKEKLVIKKYFAITYGRPVKNVGTVKSNIGKSKRRLSKIANIDSDDGKLAITYYKLLKSLNNNLFLIEFMPVTGRMHQLRLHAQLLGCPILGDDKYGNKEIMPYSKYMFLHANNIYLSETIVGKEIKLEAKLPFYFTRRII</sequence>
<reference key="1">
    <citation type="journal article" date="1998" name="Nature">
        <title>The genome sequence of Rickettsia prowazekii and the origin of mitochondria.</title>
        <authorList>
            <person name="Andersson S.G.E."/>
            <person name="Zomorodipour A."/>
            <person name="Andersson J.O."/>
            <person name="Sicheritz-Ponten T."/>
            <person name="Alsmark U.C.M."/>
            <person name="Podowski R.M."/>
            <person name="Naeslund A.K."/>
            <person name="Eriksson A.-S."/>
            <person name="Winkler H.H."/>
            <person name="Kurland C.G."/>
        </authorList>
    </citation>
    <scope>NUCLEOTIDE SEQUENCE [LARGE SCALE GENOMIC DNA]</scope>
    <source>
        <strain>Madrid E</strain>
    </source>
</reference>
<name>RLUC_RICPR</name>
<protein>
    <recommendedName>
        <fullName>Ribosomal large subunit pseudouridine synthase C</fullName>
        <ecNumber>5.4.99.24</ecNumber>
    </recommendedName>
    <alternativeName>
        <fullName>23S rRNA pseudouridine(955/2504/2580) synthase</fullName>
    </alternativeName>
    <alternativeName>
        <fullName>rRNA pseudouridylate synthase C</fullName>
    </alternativeName>
    <alternativeName>
        <fullName>rRNA-uridine isomerase C</fullName>
    </alternativeName>
</protein>
<accession>Q9ZDR7</accession>
<comment type="function">
    <text evidence="1">Responsible for synthesis of pseudouridine from uracil at positions 955, 2504 and 2580 in 23S ribosomal RNA.</text>
</comment>
<comment type="catalytic activity">
    <reaction>
        <text>uridine(955/2504/2580) in 23S rRNA = pseudouridine(955/2504/2580) in 23S rRNA</text>
        <dbReference type="Rhea" id="RHEA:42528"/>
        <dbReference type="Rhea" id="RHEA-COMP:10099"/>
        <dbReference type="Rhea" id="RHEA-COMP:10100"/>
        <dbReference type="ChEBI" id="CHEBI:65314"/>
        <dbReference type="ChEBI" id="CHEBI:65315"/>
        <dbReference type="EC" id="5.4.99.24"/>
    </reaction>
</comment>
<comment type="similarity">
    <text evidence="3">Belongs to the pseudouridine synthase RluA family.</text>
</comment>
<evidence type="ECO:0000250" key="1"/>
<evidence type="ECO:0000255" key="2">
    <source>
        <dbReference type="PROSITE-ProRule" id="PRU00182"/>
    </source>
</evidence>
<evidence type="ECO:0000305" key="3"/>